<name>GLMM_COXBR</name>
<gene>
    <name evidence="1" type="primary">glmM</name>
    <name type="ordered locus">COXBURSA331_A1504</name>
</gene>
<feature type="chain" id="PRO_1000087764" description="Phosphoglucosamine mutase">
    <location>
        <begin position="1"/>
        <end position="446"/>
    </location>
</feature>
<feature type="active site" description="Phosphoserine intermediate" evidence="1">
    <location>
        <position position="101"/>
    </location>
</feature>
<feature type="binding site" description="via phosphate group" evidence="1">
    <location>
        <position position="101"/>
    </location>
    <ligand>
        <name>Mg(2+)</name>
        <dbReference type="ChEBI" id="CHEBI:18420"/>
    </ligand>
</feature>
<feature type="binding site" evidence="1">
    <location>
        <position position="240"/>
    </location>
    <ligand>
        <name>Mg(2+)</name>
        <dbReference type="ChEBI" id="CHEBI:18420"/>
    </ligand>
</feature>
<feature type="binding site" evidence="1">
    <location>
        <position position="242"/>
    </location>
    <ligand>
        <name>Mg(2+)</name>
        <dbReference type="ChEBI" id="CHEBI:18420"/>
    </ligand>
</feature>
<feature type="binding site" evidence="1">
    <location>
        <position position="244"/>
    </location>
    <ligand>
        <name>Mg(2+)</name>
        <dbReference type="ChEBI" id="CHEBI:18420"/>
    </ligand>
</feature>
<feature type="modified residue" description="Phosphoserine" evidence="1">
    <location>
        <position position="101"/>
    </location>
</feature>
<sequence>MQKKYFGTDGIRGKVGNSLINAEFMLKLGWAVGRVLANSHSATVLIGKDTRISGYMIESALQAGLSAAGVNIKLTGPMPTPAIAYLTHSVRADAGIVISASHNHYPDNGVKFFNKDGFKLSDELELAIEKQIDKPMKTVVADRLGKAARMNEAHGRYIEFCKSTFPSNLTLKGLKIVVDCANGAAYAVAPSIFHELGAEVVAIADDPDGFNINQTCGATDTAHLQEMVVKHNADVGIAFDGDGDRLIMVDHHGLRVDGDELLCIMAIDRFYLKENAPLGVVGTIMSNLGLEHTLKRHHIAFERSPVGDRYVLDLMQQKGWFLGGESSGHIVDLGFTTTGDGVITALQILRIMQQAEKPLADLKKVMVKHPQVLINVPIKGILDIAQNPNIKKAITEAEKQLNGAGRILLRPSGTEPVIRVMVEGSDEGIVRQTAEMLAAAVQQSTL</sequence>
<comment type="function">
    <text evidence="1">Catalyzes the conversion of glucosamine-6-phosphate to glucosamine-1-phosphate.</text>
</comment>
<comment type="catalytic activity">
    <reaction evidence="1">
        <text>alpha-D-glucosamine 1-phosphate = D-glucosamine 6-phosphate</text>
        <dbReference type="Rhea" id="RHEA:23424"/>
        <dbReference type="ChEBI" id="CHEBI:58516"/>
        <dbReference type="ChEBI" id="CHEBI:58725"/>
        <dbReference type="EC" id="5.4.2.10"/>
    </reaction>
</comment>
<comment type="cofactor">
    <cofactor evidence="1">
        <name>Mg(2+)</name>
        <dbReference type="ChEBI" id="CHEBI:18420"/>
    </cofactor>
    <text evidence="1">Binds 1 Mg(2+) ion per subunit.</text>
</comment>
<comment type="PTM">
    <text evidence="1">Activated by phosphorylation.</text>
</comment>
<comment type="similarity">
    <text evidence="1">Belongs to the phosphohexose mutase family.</text>
</comment>
<organism>
    <name type="scientific">Coxiella burnetii (strain RSA 331 / Henzerling II)</name>
    <dbReference type="NCBI Taxonomy" id="360115"/>
    <lineage>
        <taxon>Bacteria</taxon>
        <taxon>Pseudomonadati</taxon>
        <taxon>Pseudomonadota</taxon>
        <taxon>Gammaproteobacteria</taxon>
        <taxon>Legionellales</taxon>
        <taxon>Coxiellaceae</taxon>
        <taxon>Coxiella</taxon>
    </lineage>
</organism>
<protein>
    <recommendedName>
        <fullName evidence="1">Phosphoglucosamine mutase</fullName>
        <ecNumber evidence="1">5.4.2.10</ecNumber>
    </recommendedName>
</protein>
<accession>A9N8M1</accession>
<dbReference type="EC" id="5.4.2.10" evidence="1"/>
<dbReference type="EMBL" id="CP000890">
    <property type="protein sequence ID" value="ABX78245.1"/>
    <property type="molecule type" value="Genomic_DNA"/>
</dbReference>
<dbReference type="RefSeq" id="WP_010958170.1">
    <property type="nucleotide sequence ID" value="NC_010117.1"/>
</dbReference>
<dbReference type="SMR" id="A9N8M1"/>
<dbReference type="KEGG" id="cbs:COXBURSA331_A1504"/>
<dbReference type="HOGENOM" id="CLU_016950_7_0_6"/>
<dbReference type="GO" id="GO:0005829">
    <property type="term" value="C:cytosol"/>
    <property type="evidence" value="ECO:0007669"/>
    <property type="project" value="TreeGrafter"/>
</dbReference>
<dbReference type="GO" id="GO:0000287">
    <property type="term" value="F:magnesium ion binding"/>
    <property type="evidence" value="ECO:0007669"/>
    <property type="project" value="UniProtKB-UniRule"/>
</dbReference>
<dbReference type="GO" id="GO:0008966">
    <property type="term" value="F:phosphoglucosamine mutase activity"/>
    <property type="evidence" value="ECO:0007669"/>
    <property type="project" value="UniProtKB-UniRule"/>
</dbReference>
<dbReference type="GO" id="GO:0004615">
    <property type="term" value="F:phosphomannomutase activity"/>
    <property type="evidence" value="ECO:0007669"/>
    <property type="project" value="TreeGrafter"/>
</dbReference>
<dbReference type="GO" id="GO:0005975">
    <property type="term" value="P:carbohydrate metabolic process"/>
    <property type="evidence" value="ECO:0007669"/>
    <property type="project" value="InterPro"/>
</dbReference>
<dbReference type="GO" id="GO:0009252">
    <property type="term" value="P:peptidoglycan biosynthetic process"/>
    <property type="evidence" value="ECO:0007669"/>
    <property type="project" value="TreeGrafter"/>
</dbReference>
<dbReference type="GO" id="GO:0006048">
    <property type="term" value="P:UDP-N-acetylglucosamine biosynthetic process"/>
    <property type="evidence" value="ECO:0007669"/>
    <property type="project" value="TreeGrafter"/>
</dbReference>
<dbReference type="CDD" id="cd05802">
    <property type="entry name" value="GlmM"/>
    <property type="match status" value="1"/>
</dbReference>
<dbReference type="FunFam" id="3.30.310.50:FF:000001">
    <property type="entry name" value="Phosphoglucosamine mutase"/>
    <property type="match status" value="1"/>
</dbReference>
<dbReference type="FunFam" id="3.40.120.10:FF:000001">
    <property type="entry name" value="Phosphoglucosamine mutase"/>
    <property type="match status" value="1"/>
</dbReference>
<dbReference type="FunFam" id="3.40.120.10:FF:000003">
    <property type="entry name" value="Phosphoglucosamine mutase"/>
    <property type="match status" value="1"/>
</dbReference>
<dbReference type="Gene3D" id="3.40.120.10">
    <property type="entry name" value="Alpha-D-Glucose-1,6-Bisphosphate, subunit A, domain 3"/>
    <property type="match status" value="3"/>
</dbReference>
<dbReference type="Gene3D" id="3.30.310.50">
    <property type="entry name" value="Alpha-D-phosphohexomutase, C-terminal domain"/>
    <property type="match status" value="1"/>
</dbReference>
<dbReference type="HAMAP" id="MF_01554_B">
    <property type="entry name" value="GlmM_B"/>
    <property type="match status" value="1"/>
</dbReference>
<dbReference type="InterPro" id="IPR005844">
    <property type="entry name" value="A-D-PHexomutase_a/b/a-I"/>
</dbReference>
<dbReference type="InterPro" id="IPR016055">
    <property type="entry name" value="A-D-PHexomutase_a/b/a-I/II/III"/>
</dbReference>
<dbReference type="InterPro" id="IPR005845">
    <property type="entry name" value="A-D-PHexomutase_a/b/a-II"/>
</dbReference>
<dbReference type="InterPro" id="IPR005846">
    <property type="entry name" value="A-D-PHexomutase_a/b/a-III"/>
</dbReference>
<dbReference type="InterPro" id="IPR005843">
    <property type="entry name" value="A-D-PHexomutase_C"/>
</dbReference>
<dbReference type="InterPro" id="IPR036900">
    <property type="entry name" value="A-D-PHexomutase_C_sf"/>
</dbReference>
<dbReference type="InterPro" id="IPR005841">
    <property type="entry name" value="Alpha-D-phosphohexomutase_SF"/>
</dbReference>
<dbReference type="InterPro" id="IPR006352">
    <property type="entry name" value="GlmM_bact"/>
</dbReference>
<dbReference type="InterPro" id="IPR050060">
    <property type="entry name" value="Phosphoglucosamine_mutase"/>
</dbReference>
<dbReference type="NCBIfam" id="TIGR01455">
    <property type="entry name" value="glmM"/>
    <property type="match status" value="1"/>
</dbReference>
<dbReference type="NCBIfam" id="NF008139">
    <property type="entry name" value="PRK10887.1"/>
    <property type="match status" value="1"/>
</dbReference>
<dbReference type="PANTHER" id="PTHR42946:SF1">
    <property type="entry name" value="PHOSPHOGLUCOMUTASE (ALPHA-D-GLUCOSE-1,6-BISPHOSPHATE-DEPENDENT)"/>
    <property type="match status" value="1"/>
</dbReference>
<dbReference type="PANTHER" id="PTHR42946">
    <property type="entry name" value="PHOSPHOHEXOSE MUTASE"/>
    <property type="match status" value="1"/>
</dbReference>
<dbReference type="Pfam" id="PF02878">
    <property type="entry name" value="PGM_PMM_I"/>
    <property type="match status" value="1"/>
</dbReference>
<dbReference type="Pfam" id="PF02879">
    <property type="entry name" value="PGM_PMM_II"/>
    <property type="match status" value="1"/>
</dbReference>
<dbReference type="Pfam" id="PF02880">
    <property type="entry name" value="PGM_PMM_III"/>
    <property type="match status" value="1"/>
</dbReference>
<dbReference type="Pfam" id="PF00408">
    <property type="entry name" value="PGM_PMM_IV"/>
    <property type="match status" value="1"/>
</dbReference>
<dbReference type="PRINTS" id="PR00509">
    <property type="entry name" value="PGMPMM"/>
</dbReference>
<dbReference type="SUPFAM" id="SSF55957">
    <property type="entry name" value="Phosphoglucomutase, C-terminal domain"/>
    <property type="match status" value="1"/>
</dbReference>
<dbReference type="SUPFAM" id="SSF53738">
    <property type="entry name" value="Phosphoglucomutase, first 3 domains"/>
    <property type="match status" value="3"/>
</dbReference>
<keyword id="KW-0413">Isomerase</keyword>
<keyword id="KW-0460">Magnesium</keyword>
<keyword id="KW-0479">Metal-binding</keyword>
<keyword id="KW-0597">Phosphoprotein</keyword>
<reference key="1">
    <citation type="submission" date="2007-11" db="EMBL/GenBank/DDBJ databases">
        <title>Genome sequencing of phylogenetically and phenotypically diverse Coxiella burnetii isolates.</title>
        <authorList>
            <person name="Seshadri R."/>
            <person name="Samuel J.E."/>
        </authorList>
    </citation>
    <scope>NUCLEOTIDE SEQUENCE [LARGE SCALE GENOMIC DNA]</scope>
    <source>
        <strain>RSA 331 / Henzerling II</strain>
    </source>
</reference>
<proteinExistence type="inferred from homology"/>
<evidence type="ECO:0000255" key="1">
    <source>
        <dbReference type="HAMAP-Rule" id="MF_01554"/>
    </source>
</evidence>